<sequence>MRVLVQRVSQAAVTVDGQTSGEIGAGALLLVGIEESDGPDDIGWLVRKISQLRIFNDEAGVMNRSLIDCGGEALAVSQFTLHASVKKGNRPSYSRAARGEISRPLFDRFVAELSAALGKTVPTGVFGADMRVSLVNDGPVTIWLDSRNPE</sequence>
<proteinExistence type="inferred from homology"/>
<protein>
    <recommendedName>
        <fullName evidence="1">D-aminoacyl-tRNA deacylase</fullName>
        <shortName evidence="1">DTD</shortName>
        <ecNumber evidence="1">3.1.1.96</ecNumber>
    </recommendedName>
    <alternativeName>
        <fullName evidence="1">Gly-tRNA(Ala) deacylase</fullName>
    </alternativeName>
</protein>
<feature type="chain" id="PRO_0000164529" description="D-aminoacyl-tRNA deacylase">
    <location>
        <begin position="1"/>
        <end position="150"/>
    </location>
</feature>
<feature type="short sequence motif" description="Gly-cisPro motif, important for rejection of L-amino acids" evidence="1">
    <location>
        <begin position="138"/>
        <end position="139"/>
    </location>
</feature>
<name>DTD_CHRVO</name>
<keyword id="KW-0963">Cytoplasm</keyword>
<keyword id="KW-0378">Hydrolase</keyword>
<keyword id="KW-1185">Reference proteome</keyword>
<keyword id="KW-0694">RNA-binding</keyword>
<keyword id="KW-0820">tRNA-binding</keyword>
<dbReference type="EC" id="3.1.1.96" evidence="1"/>
<dbReference type="EMBL" id="AE016825">
    <property type="protein sequence ID" value="AAQ58926.1"/>
    <property type="molecule type" value="Genomic_DNA"/>
</dbReference>
<dbReference type="RefSeq" id="WP_011134805.1">
    <property type="nucleotide sequence ID" value="NC_005085.1"/>
</dbReference>
<dbReference type="SMR" id="Q7NYM3"/>
<dbReference type="STRING" id="243365.CV_1251"/>
<dbReference type="GeneID" id="66366911"/>
<dbReference type="KEGG" id="cvi:CV_1251"/>
<dbReference type="eggNOG" id="COG1490">
    <property type="taxonomic scope" value="Bacteria"/>
</dbReference>
<dbReference type="HOGENOM" id="CLU_076901_1_1_4"/>
<dbReference type="OrthoDB" id="9801395at2"/>
<dbReference type="Proteomes" id="UP000001424">
    <property type="component" value="Chromosome"/>
</dbReference>
<dbReference type="GO" id="GO:0005737">
    <property type="term" value="C:cytoplasm"/>
    <property type="evidence" value="ECO:0007669"/>
    <property type="project" value="UniProtKB-SubCell"/>
</dbReference>
<dbReference type="GO" id="GO:0051500">
    <property type="term" value="F:D-tyrosyl-tRNA(Tyr) deacylase activity"/>
    <property type="evidence" value="ECO:0007669"/>
    <property type="project" value="TreeGrafter"/>
</dbReference>
<dbReference type="GO" id="GO:0106026">
    <property type="term" value="F:Gly-tRNA(Ala) deacylase activity"/>
    <property type="evidence" value="ECO:0007669"/>
    <property type="project" value="UniProtKB-UniRule"/>
</dbReference>
<dbReference type="GO" id="GO:0043908">
    <property type="term" value="F:Ser(Gly)-tRNA(Ala) hydrolase activity"/>
    <property type="evidence" value="ECO:0007669"/>
    <property type="project" value="UniProtKB-UniRule"/>
</dbReference>
<dbReference type="GO" id="GO:0000049">
    <property type="term" value="F:tRNA binding"/>
    <property type="evidence" value="ECO:0007669"/>
    <property type="project" value="UniProtKB-UniRule"/>
</dbReference>
<dbReference type="GO" id="GO:0019478">
    <property type="term" value="P:D-amino acid catabolic process"/>
    <property type="evidence" value="ECO:0007669"/>
    <property type="project" value="UniProtKB-UniRule"/>
</dbReference>
<dbReference type="FunFam" id="3.50.80.10:FF:000001">
    <property type="entry name" value="D-aminoacyl-tRNA deacylase"/>
    <property type="match status" value="1"/>
</dbReference>
<dbReference type="Gene3D" id="3.50.80.10">
    <property type="entry name" value="D-tyrosyl-tRNA(Tyr) deacylase"/>
    <property type="match status" value="1"/>
</dbReference>
<dbReference type="HAMAP" id="MF_00518">
    <property type="entry name" value="Deacylase_Dtd"/>
    <property type="match status" value="1"/>
</dbReference>
<dbReference type="InterPro" id="IPR003732">
    <property type="entry name" value="Daa-tRNA_deacyls_DTD"/>
</dbReference>
<dbReference type="InterPro" id="IPR023509">
    <property type="entry name" value="DTD-like_sf"/>
</dbReference>
<dbReference type="NCBIfam" id="TIGR00256">
    <property type="entry name" value="D-aminoacyl-tRNA deacylase"/>
    <property type="match status" value="1"/>
</dbReference>
<dbReference type="PANTHER" id="PTHR10472:SF5">
    <property type="entry name" value="D-AMINOACYL-TRNA DEACYLASE 1"/>
    <property type="match status" value="1"/>
</dbReference>
<dbReference type="PANTHER" id="PTHR10472">
    <property type="entry name" value="D-TYROSYL-TRNA TYR DEACYLASE"/>
    <property type="match status" value="1"/>
</dbReference>
<dbReference type="Pfam" id="PF02580">
    <property type="entry name" value="Tyr_Deacylase"/>
    <property type="match status" value="1"/>
</dbReference>
<dbReference type="SUPFAM" id="SSF69500">
    <property type="entry name" value="DTD-like"/>
    <property type="match status" value="1"/>
</dbReference>
<reference key="1">
    <citation type="journal article" date="2003" name="Proc. Natl. Acad. Sci. U.S.A.">
        <title>The complete genome sequence of Chromobacterium violaceum reveals remarkable and exploitable bacterial adaptability.</title>
        <authorList>
            <person name="Vasconcelos A.T.R."/>
            <person name="de Almeida D.F."/>
            <person name="Hungria M."/>
            <person name="Guimaraes C.T."/>
            <person name="Antonio R.V."/>
            <person name="Almeida F.C."/>
            <person name="de Almeida L.G.P."/>
            <person name="de Almeida R."/>
            <person name="Alves-Gomes J.A."/>
            <person name="Andrade E.M."/>
            <person name="Araripe J."/>
            <person name="de Araujo M.F.F."/>
            <person name="Astolfi-Filho S."/>
            <person name="Azevedo V."/>
            <person name="Baptista A.J."/>
            <person name="Bataus L.A.M."/>
            <person name="Batista J.S."/>
            <person name="Belo A."/>
            <person name="van den Berg C."/>
            <person name="Bogo M."/>
            <person name="Bonatto S."/>
            <person name="Bordignon J."/>
            <person name="Brigido M.M."/>
            <person name="Brito C.A."/>
            <person name="Brocchi M."/>
            <person name="Burity H.A."/>
            <person name="Camargo A.A."/>
            <person name="Cardoso D.D.P."/>
            <person name="Carneiro N.P."/>
            <person name="Carraro D.M."/>
            <person name="Carvalho C.M.B."/>
            <person name="Cascardo J.C.M."/>
            <person name="Cavada B.S."/>
            <person name="Chueire L.M.O."/>
            <person name="Creczynski-Pasa T.B."/>
            <person name="Cunha-Junior N.C."/>
            <person name="Fagundes N."/>
            <person name="Falcao C.L."/>
            <person name="Fantinatti F."/>
            <person name="Farias I.P."/>
            <person name="Felipe M.S.S."/>
            <person name="Ferrari L.P."/>
            <person name="Ferro J.A."/>
            <person name="Ferro M.I.T."/>
            <person name="Franco G.R."/>
            <person name="Freitas N.S.A."/>
            <person name="Furlan L.R."/>
            <person name="Gazzinelli R.T."/>
            <person name="Gomes E.A."/>
            <person name="Goncalves P.R."/>
            <person name="Grangeiro T.B."/>
            <person name="Grattapaglia D."/>
            <person name="Grisard E.C."/>
            <person name="Hanna E.S."/>
            <person name="Jardim S.N."/>
            <person name="Laurino J."/>
            <person name="Leoi L.C.T."/>
            <person name="Lima L.F.A."/>
            <person name="Loureiro M.F."/>
            <person name="Lyra M.C.C.P."/>
            <person name="Madeira H.M.F."/>
            <person name="Manfio G.P."/>
            <person name="Maranhao A.Q."/>
            <person name="Martins W.S."/>
            <person name="di Mauro S.M.Z."/>
            <person name="de Medeiros S.R.B."/>
            <person name="Meissner R.V."/>
            <person name="Moreira M.A.M."/>
            <person name="Nascimento F.F."/>
            <person name="Nicolas M.F."/>
            <person name="Oliveira J.G."/>
            <person name="Oliveira S.C."/>
            <person name="Paixao R.F.C."/>
            <person name="Parente J.A."/>
            <person name="Pedrosa F.O."/>
            <person name="Pena S.D.J."/>
            <person name="Pereira J.O."/>
            <person name="Pereira M."/>
            <person name="Pinto L.S.R.C."/>
            <person name="Pinto L.S."/>
            <person name="Porto J.I.R."/>
            <person name="Potrich D.P."/>
            <person name="Ramalho-Neto C.E."/>
            <person name="Reis A.M.M."/>
            <person name="Rigo L.U."/>
            <person name="Rondinelli E."/>
            <person name="Santos E.B.P."/>
            <person name="Santos F.R."/>
            <person name="Schneider M.P.C."/>
            <person name="Seuanez H.N."/>
            <person name="Silva A.M.R."/>
            <person name="da Silva A.L.C."/>
            <person name="Silva D.W."/>
            <person name="Silva R."/>
            <person name="Simoes I.C."/>
            <person name="Simon D."/>
            <person name="Soares C.M.A."/>
            <person name="Soares R.B.A."/>
            <person name="Souza E.M."/>
            <person name="Souza K.R.L."/>
            <person name="Souza R.C."/>
            <person name="Steffens M.B.R."/>
            <person name="Steindel M."/>
            <person name="Teixeira S.R."/>
            <person name="Urmenyi T."/>
            <person name="Vettore A."/>
            <person name="Wassem R."/>
            <person name="Zaha A."/>
            <person name="Simpson A.J.G."/>
        </authorList>
    </citation>
    <scope>NUCLEOTIDE SEQUENCE [LARGE SCALE GENOMIC DNA]</scope>
    <source>
        <strain>ATCC 12472 / DSM 30191 / JCM 1249 / CCUG 213 / NBRC 12614 / NCIMB 9131 / NCTC 9757 / MK</strain>
    </source>
</reference>
<gene>
    <name evidence="1" type="primary">dtd</name>
    <name type="ordered locus">CV_1251</name>
</gene>
<organism>
    <name type="scientific">Chromobacterium violaceum (strain ATCC 12472 / DSM 30191 / JCM 1249 / CCUG 213 / NBRC 12614 / NCIMB 9131 / NCTC 9757 / MK)</name>
    <dbReference type="NCBI Taxonomy" id="243365"/>
    <lineage>
        <taxon>Bacteria</taxon>
        <taxon>Pseudomonadati</taxon>
        <taxon>Pseudomonadota</taxon>
        <taxon>Betaproteobacteria</taxon>
        <taxon>Neisseriales</taxon>
        <taxon>Chromobacteriaceae</taxon>
        <taxon>Chromobacterium</taxon>
    </lineage>
</organism>
<comment type="function">
    <text evidence="1">An aminoacyl-tRNA editing enzyme that deacylates mischarged D-aminoacyl-tRNAs. Also deacylates mischarged glycyl-tRNA(Ala), protecting cells against glycine mischarging by AlaRS. Acts via tRNA-based rather than protein-based catalysis; rejects L-amino acids rather than detecting D-amino acids in the active site. By recycling D-aminoacyl-tRNA to D-amino acids and free tRNA molecules, this enzyme counteracts the toxicity associated with the formation of D-aminoacyl-tRNA entities in vivo and helps enforce protein L-homochirality.</text>
</comment>
<comment type="catalytic activity">
    <reaction evidence="1">
        <text>glycyl-tRNA(Ala) + H2O = tRNA(Ala) + glycine + H(+)</text>
        <dbReference type="Rhea" id="RHEA:53744"/>
        <dbReference type="Rhea" id="RHEA-COMP:9657"/>
        <dbReference type="Rhea" id="RHEA-COMP:13640"/>
        <dbReference type="ChEBI" id="CHEBI:15377"/>
        <dbReference type="ChEBI" id="CHEBI:15378"/>
        <dbReference type="ChEBI" id="CHEBI:57305"/>
        <dbReference type="ChEBI" id="CHEBI:78442"/>
        <dbReference type="ChEBI" id="CHEBI:78522"/>
        <dbReference type="EC" id="3.1.1.96"/>
    </reaction>
</comment>
<comment type="catalytic activity">
    <reaction evidence="1">
        <text>a D-aminoacyl-tRNA + H2O = a tRNA + a D-alpha-amino acid + H(+)</text>
        <dbReference type="Rhea" id="RHEA:13953"/>
        <dbReference type="Rhea" id="RHEA-COMP:10123"/>
        <dbReference type="Rhea" id="RHEA-COMP:10124"/>
        <dbReference type="ChEBI" id="CHEBI:15377"/>
        <dbReference type="ChEBI" id="CHEBI:15378"/>
        <dbReference type="ChEBI" id="CHEBI:59871"/>
        <dbReference type="ChEBI" id="CHEBI:78442"/>
        <dbReference type="ChEBI" id="CHEBI:79333"/>
        <dbReference type="EC" id="3.1.1.96"/>
    </reaction>
</comment>
<comment type="subunit">
    <text evidence="1">Homodimer.</text>
</comment>
<comment type="subcellular location">
    <subcellularLocation>
        <location evidence="1">Cytoplasm</location>
    </subcellularLocation>
</comment>
<comment type="domain">
    <text evidence="1">A Gly-cisPro motif from one monomer fits into the active site of the other monomer to allow specific chiral rejection of L-amino acids.</text>
</comment>
<comment type="similarity">
    <text evidence="1">Belongs to the DTD family.</text>
</comment>
<accession>Q7NYM3</accession>
<evidence type="ECO:0000255" key="1">
    <source>
        <dbReference type="HAMAP-Rule" id="MF_00518"/>
    </source>
</evidence>